<comment type="function">
    <text evidence="1">May be involved in the regulation of cell cycle progression. Exhibits H3K4me3-binding activity.</text>
</comment>
<comment type="subunit">
    <text evidence="1">Interacts with C11orf84/SPINDOC.</text>
</comment>
<comment type="subcellular location">
    <subcellularLocation>
        <location evidence="2">Nucleus</location>
    </subcellularLocation>
</comment>
<comment type="similarity">
    <text evidence="6">Belongs to the SPIN/STSY family.</text>
</comment>
<gene>
    <name type="primary">SPIN2</name>
</gene>
<feature type="chain" id="PRO_0000181370" description="Spindlin-2">
    <location>
        <begin position="1"/>
        <end position="258"/>
    </location>
</feature>
<feature type="region of interest" description="Disordered" evidence="5">
    <location>
        <begin position="1"/>
        <end position="49"/>
    </location>
</feature>
<feature type="region of interest" description="Tudor-like domain 1" evidence="4">
    <location>
        <begin position="50"/>
        <end position="99"/>
    </location>
</feature>
<feature type="region of interest" description="Tudor-like domain 2" evidence="4">
    <location>
        <begin position="129"/>
        <end position="178"/>
    </location>
</feature>
<feature type="region of interest" description="Histone H3K4me3 and H3R8me2a binding" evidence="3">
    <location>
        <position position="138"/>
    </location>
</feature>
<feature type="region of interest" description="Tudor-like domain 3" evidence="4">
    <location>
        <begin position="210"/>
        <end position="255"/>
    </location>
</feature>
<feature type="region of interest" description="Histone H3K4me3 and H3R8me2a binding" evidence="3">
    <location>
        <begin position="246"/>
        <end position="248"/>
    </location>
</feature>
<feature type="compositionally biased region" description="Low complexity" evidence="5">
    <location>
        <begin position="1"/>
        <end position="23"/>
    </location>
</feature>
<feature type="compositionally biased region" description="Basic residues" evidence="5">
    <location>
        <begin position="28"/>
        <end position="39"/>
    </location>
</feature>
<feature type="site" description="Histone H3K4me3 and H3R8me2a binding" evidence="3">
    <location>
        <position position="169"/>
    </location>
</feature>
<feature type="site" description="Histone H3K4me3 and H3R8me2a binding" evidence="3">
    <location>
        <position position="176"/>
    </location>
</feature>
<feature type="site" description="Histone H3K4me3 and H3R8me2a binding" evidence="3">
    <location>
        <position position="180"/>
    </location>
</feature>
<organism>
    <name type="scientific">Pongo abelii</name>
    <name type="common">Sumatran orangutan</name>
    <name type="synonym">Pongo pygmaeus abelii</name>
    <dbReference type="NCBI Taxonomy" id="9601"/>
    <lineage>
        <taxon>Eukaryota</taxon>
        <taxon>Metazoa</taxon>
        <taxon>Chordata</taxon>
        <taxon>Craniata</taxon>
        <taxon>Vertebrata</taxon>
        <taxon>Euteleostomi</taxon>
        <taxon>Mammalia</taxon>
        <taxon>Eutheria</taxon>
        <taxon>Euarchontoglires</taxon>
        <taxon>Primates</taxon>
        <taxon>Haplorrhini</taxon>
        <taxon>Catarrhini</taxon>
        <taxon>Hominidae</taxon>
        <taxon>Pongo</taxon>
    </lineage>
</organism>
<proteinExistence type="evidence at transcript level"/>
<name>SPIN2_PONAB</name>
<sequence length="258" mass="29158">MKTPNAQEAEGQQTRAAAGRATGSANMTKKKVSQKKQRGRPSSQPRRNIVGCRISHGWKEGDEPITQWKGTVLDQVPINPSLYLVKYDGIDCVYGLELHRDERVLSLKILSDRVASSHISDANLANTIIGKAVEHMFEGEHGSKDEWRGMVLAQAPIMKAWFYITYEKDPVLYMYQLLDDYKEGDLRIMPESSESPPTEREPGGVVDGLIGKHVEYTKEDGSKRIGMVIHQVEAKPSVYFIKFDDDFHIYVYDLVKKS</sequence>
<keyword id="KW-0053">Apoptosis</keyword>
<keyword id="KW-0131">Cell cycle</keyword>
<keyword id="KW-0539">Nucleus</keyword>
<keyword id="KW-1185">Reference proteome</keyword>
<reference key="1">
    <citation type="submission" date="2004-11" db="EMBL/GenBank/DDBJ databases">
        <authorList>
            <consortium name="The German cDNA consortium"/>
        </authorList>
    </citation>
    <scope>NUCLEOTIDE SEQUENCE [LARGE SCALE MRNA]</scope>
    <source>
        <tissue>Heart</tissue>
    </source>
</reference>
<accession>Q5RA80</accession>
<protein>
    <recommendedName>
        <fullName>Spindlin-2</fullName>
    </recommendedName>
    <alternativeName>
        <fullName>Spindlin-like protein 2</fullName>
        <shortName>SPIN-2</shortName>
    </alternativeName>
</protein>
<dbReference type="EMBL" id="CR859138">
    <property type="protein sequence ID" value="CAH91330.1"/>
    <property type="molecule type" value="mRNA"/>
</dbReference>
<dbReference type="RefSeq" id="NP_001125785.1">
    <property type="nucleotide sequence ID" value="NM_001132313.2"/>
</dbReference>
<dbReference type="SMR" id="Q5RA80"/>
<dbReference type="FunCoup" id="Q5RA80">
    <property type="interactions" value="381"/>
</dbReference>
<dbReference type="STRING" id="9601.ENSPPYP00000022839"/>
<dbReference type="GeneID" id="100172713"/>
<dbReference type="KEGG" id="pon:100172713"/>
<dbReference type="CTD" id="474343"/>
<dbReference type="eggNOG" id="ENOG502QRYD">
    <property type="taxonomic scope" value="Eukaryota"/>
</dbReference>
<dbReference type="InParanoid" id="Q5RA80"/>
<dbReference type="OrthoDB" id="9522941at2759"/>
<dbReference type="Proteomes" id="UP000001595">
    <property type="component" value="Unplaced"/>
</dbReference>
<dbReference type="GO" id="GO:0005634">
    <property type="term" value="C:nucleus"/>
    <property type="evidence" value="ECO:0007669"/>
    <property type="project" value="UniProtKB-SubCell"/>
</dbReference>
<dbReference type="GO" id="GO:0140002">
    <property type="term" value="F:histone H3K4me3 reader activity"/>
    <property type="evidence" value="ECO:0000250"/>
    <property type="project" value="UniProtKB"/>
</dbReference>
<dbReference type="GO" id="GO:0035064">
    <property type="term" value="F:methylated histone binding"/>
    <property type="evidence" value="ECO:0007669"/>
    <property type="project" value="UniProtKB-ARBA"/>
</dbReference>
<dbReference type="GO" id="GO:0006915">
    <property type="term" value="P:apoptotic process"/>
    <property type="evidence" value="ECO:0007669"/>
    <property type="project" value="UniProtKB-KW"/>
</dbReference>
<dbReference type="GO" id="GO:0007276">
    <property type="term" value="P:gamete generation"/>
    <property type="evidence" value="ECO:0007669"/>
    <property type="project" value="InterPro"/>
</dbReference>
<dbReference type="FunFam" id="2.80.10.70:FF:000001">
    <property type="entry name" value="Spindlin 1"/>
    <property type="match status" value="1"/>
</dbReference>
<dbReference type="Gene3D" id="2.80.10.70">
    <property type="entry name" value="Spindlin/Ssty"/>
    <property type="match status" value="1"/>
</dbReference>
<dbReference type="InterPro" id="IPR003671">
    <property type="entry name" value="SPIN/Ssty"/>
</dbReference>
<dbReference type="InterPro" id="IPR042567">
    <property type="entry name" value="SPIN/Ssty_sf"/>
</dbReference>
<dbReference type="PANTHER" id="PTHR10405">
    <property type="entry name" value="SPINDLIN"/>
    <property type="match status" value="1"/>
</dbReference>
<dbReference type="Pfam" id="PF02513">
    <property type="entry name" value="Spin-Ssty"/>
    <property type="match status" value="3"/>
</dbReference>
<evidence type="ECO:0000250" key="1">
    <source>
        <dbReference type="UniProtKB" id="Q99865"/>
    </source>
</evidence>
<evidence type="ECO:0000250" key="2">
    <source>
        <dbReference type="UniProtKB" id="Q9BPZ2"/>
    </source>
</evidence>
<evidence type="ECO:0000250" key="3">
    <source>
        <dbReference type="UniProtKB" id="Q9Y657"/>
    </source>
</evidence>
<evidence type="ECO:0000255" key="4"/>
<evidence type="ECO:0000256" key="5">
    <source>
        <dbReference type="SAM" id="MobiDB-lite"/>
    </source>
</evidence>
<evidence type="ECO:0000305" key="6"/>